<comment type="catalytic activity">
    <reaction>
        <text>1-(5-phospho-beta-D-ribosyl)-5-[(5-phospho-beta-D-ribosylamino)methylideneamino]imidazole-4-carboxamide = 5-[(5-phospho-1-deoxy-D-ribulos-1-ylimino)methylamino]-1-(5-phospho-beta-D-ribosyl)imidazole-4-carboxamide</text>
        <dbReference type="Rhea" id="RHEA:15469"/>
        <dbReference type="ChEBI" id="CHEBI:58435"/>
        <dbReference type="ChEBI" id="CHEBI:58525"/>
        <dbReference type="EC" id="5.3.1.16"/>
    </reaction>
</comment>
<comment type="pathway">
    <text>Amino-acid biosynthesis; L-histidine biosynthesis; L-histidine from 5-phospho-alpha-D-ribose 1-diphosphate: step 4/9.</text>
</comment>
<comment type="subcellular location">
    <subcellularLocation>
        <location evidence="1">Cytoplasm</location>
    </subcellularLocation>
</comment>
<comment type="similarity">
    <text evidence="2">Belongs to the HisA/HisF family.</text>
</comment>
<sequence length="263" mass="28431">MTRFVGCIDLHDGKVKQIVGGTLSSKPDGEAPVTNFVSDKSPSHYAHLYASNDVQGSHVIRLGQSNDEAALMALQAAPGFLQLGGGVTKDNCQYWLQWASKVIVTSALFDSDGSFQLQRLREISGLCGRARLVVDLSCRRASDGASWTVMMNKWQTPTTLALNEETLALLSEYCSEFLIHAADVEGLCRGIDEELVAQLGLWAAQLRGDVRVVYAGGANSVADLGLVKRLSGGRVDLTYGSALDIFGGSLVRFQDCCAWNRQQ</sequence>
<dbReference type="EC" id="5.3.1.16"/>
<dbReference type="EMBL" id="AE016817">
    <property type="protein sequence ID" value="AAS51799.1"/>
    <property type="molecule type" value="Genomic_DNA"/>
</dbReference>
<dbReference type="RefSeq" id="NP_983975.1">
    <property type="nucleotide sequence ID" value="NM_209328.1"/>
</dbReference>
<dbReference type="SMR" id="Q75AP1"/>
<dbReference type="FunCoup" id="Q75AP1">
    <property type="interactions" value="229"/>
</dbReference>
<dbReference type="STRING" id="284811.Q75AP1"/>
<dbReference type="EnsemblFungi" id="AAS51799">
    <property type="protein sequence ID" value="AAS51799"/>
    <property type="gene ID" value="AGOS_ADL121W"/>
</dbReference>
<dbReference type="GeneID" id="4620118"/>
<dbReference type="KEGG" id="ago:AGOS_ADL121W"/>
<dbReference type="eggNOG" id="KOG3055">
    <property type="taxonomic scope" value="Eukaryota"/>
</dbReference>
<dbReference type="HOGENOM" id="CLU_065050_0_0_1"/>
<dbReference type="InParanoid" id="Q75AP1"/>
<dbReference type="OMA" id="IEWNKTH"/>
<dbReference type="OrthoDB" id="446074at2759"/>
<dbReference type="UniPathway" id="UPA00031">
    <property type="reaction ID" value="UER00009"/>
</dbReference>
<dbReference type="Proteomes" id="UP000000591">
    <property type="component" value="Chromosome IV"/>
</dbReference>
<dbReference type="GO" id="GO:0005737">
    <property type="term" value="C:cytoplasm"/>
    <property type="evidence" value="ECO:0000318"/>
    <property type="project" value="GO_Central"/>
</dbReference>
<dbReference type="GO" id="GO:0003949">
    <property type="term" value="F:1-(5-phosphoribosyl)-5-[(5-phosphoribosylamino)methylideneamino]imidazole-4-carboxamide isomerase activity"/>
    <property type="evidence" value="ECO:0000318"/>
    <property type="project" value="GO_Central"/>
</dbReference>
<dbReference type="GO" id="GO:0000105">
    <property type="term" value="P:L-histidine biosynthetic process"/>
    <property type="evidence" value="ECO:0000318"/>
    <property type="project" value="GO_Central"/>
</dbReference>
<dbReference type="CDD" id="cd04723">
    <property type="entry name" value="HisA_HisF"/>
    <property type="match status" value="1"/>
</dbReference>
<dbReference type="FunFam" id="3.20.20.70:FF:000110">
    <property type="entry name" value="1-(5-phosphoribosyl)-5-[(5-phosphoribosylamino)methylideneamino] imidazole-4-carboxamide isomerase, chloroplastic"/>
    <property type="match status" value="1"/>
</dbReference>
<dbReference type="Gene3D" id="3.20.20.70">
    <property type="entry name" value="Aldolase class I"/>
    <property type="match status" value="1"/>
</dbReference>
<dbReference type="InterPro" id="IPR013785">
    <property type="entry name" value="Aldolase_TIM"/>
</dbReference>
<dbReference type="InterPro" id="IPR011858">
    <property type="entry name" value="His6-like_euk"/>
</dbReference>
<dbReference type="InterPro" id="IPR006062">
    <property type="entry name" value="His_biosynth"/>
</dbReference>
<dbReference type="InterPro" id="IPR044524">
    <property type="entry name" value="Isoase_HisA-like"/>
</dbReference>
<dbReference type="InterPro" id="IPR011060">
    <property type="entry name" value="RibuloseP-bd_barrel"/>
</dbReference>
<dbReference type="NCBIfam" id="TIGR02129">
    <property type="entry name" value="hisA_euk"/>
    <property type="match status" value="1"/>
</dbReference>
<dbReference type="PANTHER" id="PTHR43090">
    <property type="entry name" value="1-(5-PHOSPHORIBOSYL)-5-[(5-PHOSPHORIBOSYLAMINO)METHYLIDENEAMINO] IMIDAZOLE-4-CARBOXAMIDE ISOMERASE"/>
    <property type="match status" value="1"/>
</dbReference>
<dbReference type="PANTHER" id="PTHR43090:SF2">
    <property type="entry name" value="1-(5-PHOSPHORIBOSYL)-5-[(5-PHOSPHORIBOSYLAMINO)METHYLIDENEAMINO] IMIDAZOLE-4-CARBOXAMIDE ISOMERASE"/>
    <property type="match status" value="1"/>
</dbReference>
<dbReference type="Pfam" id="PF00977">
    <property type="entry name" value="His_biosynth"/>
    <property type="match status" value="1"/>
</dbReference>
<dbReference type="SUPFAM" id="SSF51366">
    <property type="entry name" value="Ribulose-phoshate binding barrel"/>
    <property type="match status" value="1"/>
</dbReference>
<reference key="1">
    <citation type="journal article" date="2004" name="Science">
        <title>The Ashbya gossypii genome as a tool for mapping the ancient Saccharomyces cerevisiae genome.</title>
        <authorList>
            <person name="Dietrich F.S."/>
            <person name="Voegeli S."/>
            <person name="Brachat S."/>
            <person name="Lerch A."/>
            <person name="Gates K."/>
            <person name="Steiner S."/>
            <person name="Mohr C."/>
            <person name="Poehlmann R."/>
            <person name="Luedi P."/>
            <person name="Choi S."/>
            <person name="Wing R.A."/>
            <person name="Flavier A."/>
            <person name="Gaffney T.D."/>
            <person name="Philippsen P."/>
        </authorList>
    </citation>
    <scope>NUCLEOTIDE SEQUENCE [LARGE SCALE GENOMIC DNA]</scope>
    <source>
        <strain>ATCC 10895 / CBS 109.51 / FGSC 9923 / NRRL Y-1056</strain>
    </source>
</reference>
<reference key="2">
    <citation type="journal article" date="2013" name="G3 (Bethesda)">
        <title>Genomes of Ashbya fungi isolated from insects reveal four mating-type loci, numerous translocations, lack of transposons, and distinct gene duplications.</title>
        <authorList>
            <person name="Dietrich F.S."/>
            <person name="Voegeli S."/>
            <person name="Kuo S."/>
            <person name="Philippsen P."/>
        </authorList>
    </citation>
    <scope>GENOME REANNOTATION</scope>
    <source>
        <strain>ATCC 10895 / CBS 109.51 / FGSC 9923 / NRRL Y-1056</strain>
    </source>
</reference>
<gene>
    <name type="primary">HIS6</name>
    <name type="ordered locus">ADL121W</name>
</gene>
<organism>
    <name type="scientific">Eremothecium gossypii (strain ATCC 10895 / CBS 109.51 / FGSC 9923 / NRRL Y-1056)</name>
    <name type="common">Yeast</name>
    <name type="synonym">Ashbya gossypii</name>
    <dbReference type="NCBI Taxonomy" id="284811"/>
    <lineage>
        <taxon>Eukaryota</taxon>
        <taxon>Fungi</taxon>
        <taxon>Dikarya</taxon>
        <taxon>Ascomycota</taxon>
        <taxon>Saccharomycotina</taxon>
        <taxon>Saccharomycetes</taxon>
        <taxon>Saccharomycetales</taxon>
        <taxon>Saccharomycetaceae</taxon>
        <taxon>Eremothecium</taxon>
    </lineage>
</organism>
<feature type="chain" id="PRO_0000141955" description="1-(5-phosphoribosyl)-5-[(5-phosphoribosylamino)methylideneamino] imidazole-4-carboxamide isomerase">
    <location>
        <begin position="1"/>
        <end position="263"/>
    </location>
</feature>
<proteinExistence type="inferred from homology"/>
<accession>Q75AP1</accession>
<keyword id="KW-0028">Amino-acid biosynthesis</keyword>
<keyword id="KW-0963">Cytoplasm</keyword>
<keyword id="KW-0368">Histidine biosynthesis</keyword>
<keyword id="KW-0413">Isomerase</keyword>
<keyword id="KW-1185">Reference proteome</keyword>
<name>HIS4_EREGS</name>
<evidence type="ECO:0000250" key="1"/>
<evidence type="ECO:0000305" key="2"/>
<protein>
    <recommendedName>
        <fullName>1-(5-phosphoribosyl)-5-[(5-phosphoribosylamino)methylideneamino] imidazole-4-carboxamide isomerase</fullName>
        <ecNumber>5.3.1.16</ecNumber>
    </recommendedName>
    <alternativeName>
        <fullName>5-proFAR isomerase</fullName>
    </alternativeName>
    <alternativeName>
        <fullName>Phosphoribosylformimino-5-aminoimidazole carboxamide ribotide isomerase</fullName>
    </alternativeName>
</protein>